<keyword id="KW-0004">4Fe-4S</keyword>
<keyword id="KW-0028">Amino-acid biosynthesis</keyword>
<keyword id="KW-0100">Branched-chain amino acid biosynthesis</keyword>
<keyword id="KW-0408">Iron</keyword>
<keyword id="KW-0411">Iron-sulfur</keyword>
<keyword id="KW-0432">Leucine biosynthesis</keyword>
<keyword id="KW-0456">Lyase</keyword>
<keyword id="KW-0479">Metal-binding</keyword>
<protein>
    <recommendedName>
        <fullName evidence="1">3-isopropylmalate dehydratase large subunit</fullName>
        <ecNumber evidence="1">4.2.1.33</ecNumber>
    </recommendedName>
    <alternativeName>
        <fullName evidence="1">Alpha-IPM isomerase</fullName>
        <shortName evidence="1">IPMI</shortName>
    </alternativeName>
    <alternativeName>
        <fullName evidence="1">Isopropylmalate isomerase</fullName>
    </alternativeName>
</protein>
<proteinExistence type="inferred from homology"/>
<accession>Q66EM3</accession>
<feature type="chain" id="PRO_0000076849" description="3-isopropylmalate dehydratase large subunit">
    <location>
        <begin position="1"/>
        <end position="476"/>
    </location>
</feature>
<feature type="binding site" evidence="1">
    <location>
        <position position="353"/>
    </location>
    <ligand>
        <name>[4Fe-4S] cluster</name>
        <dbReference type="ChEBI" id="CHEBI:49883"/>
    </ligand>
</feature>
<feature type="binding site" evidence="1">
    <location>
        <position position="413"/>
    </location>
    <ligand>
        <name>[4Fe-4S] cluster</name>
        <dbReference type="ChEBI" id="CHEBI:49883"/>
    </ligand>
</feature>
<feature type="binding site" evidence="1">
    <location>
        <position position="416"/>
    </location>
    <ligand>
        <name>[4Fe-4S] cluster</name>
        <dbReference type="ChEBI" id="CHEBI:49883"/>
    </ligand>
</feature>
<dbReference type="EC" id="4.2.1.33" evidence="1"/>
<dbReference type="EMBL" id="BX936398">
    <property type="protein sequence ID" value="CAH19910.1"/>
    <property type="molecule type" value="Genomic_DNA"/>
</dbReference>
<dbReference type="RefSeq" id="WP_011191727.1">
    <property type="nucleotide sequence ID" value="NC_006155.1"/>
</dbReference>
<dbReference type="SMR" id="Q66EM3"/>
<dbReference type="KEGG" id="ypo:BZ17_1886"/>
<dbReference type="KEGG" id="yps:YPTB0670"/>
<dbReference type="PATRIC" id="fig|273123.14.peg.2003"/>
<dbReference type="UniPathway" id="UPA00048">
    <property type="reaction ID" value="UER00071"/>
</dbReference>
<dbReference type="Proteomes" id="UP000001011">
    <property type="component" value="Chromosome"/>
</dbReference>
<dbReference type="GO" id="GO:0003861">
    <property type="term" value="F:3-isopropylmalate dehydratase activity"/>
    <property type="evidence" value="ECO:0007669"/>
    <property type="project" value="UniProtKB-UniRule"/>
</dbReference>
<dbReference type="GO" id="GO:0051539">
    <property type="term" value="F:4 iron, 4 sulfur cluster binding"/>
    <property type="evidence" value="ECO:0007669"/>
    <property type="project" value="UniProtKB-KW"/>
</dbReference>
<dbReference type="GO" id="GO:0046872">
    <property type="term" value="F:metal ion binding"/>
    <property type="evidence" value="ECO:0007669"/>
    <property type="project" value="UniProtKB-KW"/>
</dbReference>
<dbReference type="GO" id="GO:0009098">
    <property type="term" value="P:L-leucine biosynthetic process"/>
    <property type="evidence" value="ECO:0007669"/>
    <property type="project" value="UniProtKB-UniRule"/>
</dbReference>
<dbReference type="CDD" id="cd01583">
    <property type="entry name" value="IPMI"/>
    <property type="match status" value="1"/>
</dbReference>
<dbReference type="FunFam" id="3.30.499.10:FF:000006">
    <property type="entry name" value="3-isopropylmalate dehydratase large subunit"/>
    <property type="match status" value="1"/>
</dbReference>
<dbReference type="FunFam" id="3.30.499.10:FF:000007">
    <property type="entry name" value="3-isopropylmalate dehydratase large subunit"/>
    <property type="match status" value="1"/>
</dbReference>
<dbReference type="Gene3D" id="3.30.499.10">
    <property type="entry name" value="Aconitase, domain 3"/>
    <property type="match status" value="2"/>
</dbReference>
<dbReference type="HAMAP" id="MF_01026">
    <property type="entry name" value="LeuC_type1"/>
    <property type="match status" value="1"/>
</dbReference>
<dbReference type="InterPro" id="IPR004430">
    <property type="entry name" value="3-IsopropMal_deHydase_lsu"/>
</dbReference>
<dbReference type="InterPro" id="IPR015931">
    <property type="entry name" value="Acnase/IPM_dHydase_lsu_aba_1/3"/>
</dbReference>
<dbReference type="InterPro" id="IPR001030">
    <property type="entry name" value="Acoase/IPM_deHydtase_lsu_aba"/>
</dbReference>
<dbReference type="InterPro" id="IPR018136">
    <property type="entry name" value="Aconitase_4Fe-4S_BS"/>
</dbReference>
<dbReference type="InterPro" id="IPR036008">
    <property type="entry name" value="Aconitase_4Fe-4S_dom"/>
</dbReference>
<dbReference type="InterPro" id="IPR050067">
    <property type="entry name" value="IPM_dehydratase_rel_enz"/>
</dbReference>
<dbReference type="InterPro" id="IPR033941">
    <property type="entry name" value="IPMI_cat"/>
</dbReference>
<dbReference type="NCBIfam" id="TIGR00170">
    <property type="entry name" value="leuC"/>
    <property type="match status" value="1"/>
</dbReference>
<dbReference type="NCBIfam" id="NF004016">
    <property type="entry name" value="PRK05478.1"/>
    <property type="match status" value="1"/>
</dbReference>
<dbReference type="NCBIfam" id="NF009116">
    <property type="entry name" value="PRK12466.1"/>
    <property type="match status" value="1"/>
</dbReference>
<dbReference type="PANTHER" id="PTHR43822:SF9">
    <property type="entry name" value="3-ISOPROPYLMALATE DEHYDRATASE"/>
    <property type="match status" value="1"/>
</dbReference>
<dbReference type="PANTHER" id="PTHR43822">
    <property type="entry name" value="HOMOACONITASE, MITOCHONDRIAL-RELATED"/>
    <property type="match status" value="1"/>
</dbReference>
<dbReference type="Pfam" id="PF00330">
    <property type="entry name" value="Aconitase"/>
    <property type="match status" value="1"/>
</dbReference>
<dbReference type="PRINTS" id="PR00415">
    <property type="entry name" value="ACONITASE"/>
</dbReference>
<dbReference type="SUPFAM" id="SSF53732">
    <property type="entry name" value="Aconitase iron-sulfur domain"/>
    <property type="match status" value="1"/>
</dbReference>
<dbReference type="PROSITE" id="PS00450">
    <property type="entry name" value="ACONITASE_1"/>
    <property type="match status" value="1"/>
</dbReference>
<dbReference type="PROSITE" id="PS01244">
    <property type="entry name" value="ACONITASE_2"/>
    <property type="match status" value="1"/>
</dbReference>
<sequence length="476" mass="50559">MGTTSSQSKTLYQKLYDAHIVHEAPNETPLLYIDRHLVHEVTSPQAFDGLRAMGRPVRQPGKTFATMDHNVSTQTKDINASGEMARIQMQELIKNCAEFGVSLYDLNHPFQGIVHVIGPEQGMTLPGMTIVCGDSHTATHGAFGSLAFGIGTSEVEHVLATQTLKQGRAKTMRIEVNGTVGAGITAKDIVLAIIGKTGSAGGTGHVVEFCGSAIEALSMEGRMTLCNMAIEMGAKAGLVAPDDTTFAYLKGRQFAPTGEQWEQGVAYWRTLKSDADAQFDTIVTLDAADIAPQVTWGTNPGQVIAVNQIIPAPESFSDPVERASAEKALAYMDLRPGIKLTEVAIDKVFIGSCTNSRIEDLRAAAAIAQGRKVAKGVQAIVVPGSGPVKAQAEAEGLDKIFIAAGFEWRLPGCSMCLAMNNDRLEPGERCASTSNRNFEGRQGRGGRTHLVSPAMAAAAAVSGHFADVRELSAATH</sequence>
<name>LEUC_YERPS</name>
<gene>
    <name evidence="1" type="primary">leuC</name>
    <name type="ordered locus">YPTB0670</name>
</gene>
<reference key="1">
    <citation type="journal article" date="2004" name="Proc. Natl. Acad. Sci. U.S.A.">
        <title>Insights into the evolution of Yersinia pestis through whole-genome comparison with Yersinia pseudotuberculosis.</title>
        <authorList>
            <person name="Chain P.S.G."/>
            <person name="Carniel E."/>
            <person name="Larimer F.W."/>
            <person name="Lamerdin J."/>
            <person name="Stoutland P.O."/>
            <person name="Regala W.M."/>
            <person name="Georgescu A.M."/>
            <person name="Vergez L.M."/>
            <person name="Land M.L."/>
            <person name="Motin V.L."/>
            <person name="Brubaker R.R."/>
            <person name="Fowler J."/>
            <person name="Hinnebusch J."/>
            <person name="Marceau M."/>
            <person name="Medigue C."/>
            <person name="Simonet M."/>
            <person name="Chenal-Francisque V."/>
            <person name="Souza B."/>
            <person name="Dacheux D."/>
            <person name="Elliott J.M."/>
            <person name="Derbise A."/>
            <person name="Hauser L.J."/>
            <person name="Garcia E."/>
        </authorList>
    </citation>
    <scope>NUCLEOTIDE SEQUENCE [LARGE SCALE GENOMIC DNA]</scope>
    <source>
        <strain>IP32953</strain>
    </source>
</reference>
<organism>
    <name type="scientific">Yersinia pseudotuberculosis serotype I (strain IP32953)</name>
    <dbReference type="NCBI Taxonomy" id="273123"/>
    <lineage>
        <taxon>Bacteria</taxon>
        <taxon>Pseudomonadati</taxon>
        <taxon>Pseudomonadota</taxon>
        <taxon>Gammaproteobacteria</taxon>
        <taxon>Enterobacterales</taxon>
        <taxon>Yersiniaceae</taxon>
        <taxon>Yersinia</taxon>
    </lineage>
</organism>
<comment type="function">
    <text evidence="1">Catalyzes the isomerization between 2-isopropylmalate and 3-isopropylmalate, via the formation of 2-isopropylmaleate.</text>
</comment>
<comment type="catalytic activity">
    <reaction evidence="1">
        <text>(2R,3S)-3-isopropylmalate = (2S)-2-isopropylmalate</text>
        <dbReference type="Rhea" id="RHEA:32287"/>
        <dbReference type="ChEBI" id="CHEBI:1178"/>
        <dbReference type="ChEBI" id="CHEBI:35121"/>
        <dbReference type="EC" id="4.2.1.33"/>
    </reaction>
</comment>
<comment type="cofactor">
    <cofactor evidence="1">
        <name>[4Fe-4S] cluster</name>
        <dbReference type="ChEBI" id="CHEBI:49883"/>
    </cofactor>
    <text evidence="1">Binds 1 [4Fe-4S] cluster per subunit.</text>
</comment>
<comment type="pathway">
    <text evidence="1">Amino-acid biosynthesis; L-leucine biosynthesis; L-leucine from 3-methyl-2-oxobutanoate: step 2/4.</text>
</comment>
<comment type="subunit">
    <text evidence="1">Heterodimer of LeuC and LeuD.</text>
</comment>
<comment type="similarity">
    <text evidence="1">Belongs to the aconitase/IPM isomerase family. LeuC type 1 subfamily.</text>
</comment>
<evidence type="ECO:0000255" key="1">
    <source>
        <dbReference type="HAMAP-Rule" id="MF_01026"/>
    </source>
</evidence>